<evidence type="ECO:0000250" key="1">
    <source>
        <dbReference type="UniProtKB" id="P00787"/>
    </source>
</evidence>
<evidence type="ECO:0000250" key="2">
    <source>
        <dbReference type="UniProtKB" id="P07858"/>
    </source>
</evidence>
<evidence type="ECO:0000250" key="3">
    <source>
        <dbReference type="UniProtKB" id="P10605"/>
    </source>
</evidence>
<evidence type="ECO:0000255" key="4"/>
<evidence type="ECO:0000255" key="5">
    <source>
        <dbReference type="PROSITE-ProRule" id="PRU10088"/>
    </source>
</evidence>
<evidence type="ECO:0000255" key="6">
    <source>
        <dbReference type="PROSITE-ProRule" id="PRU10089"/>
    </source>
</evidence>
<evidence type="ECO:0000255" key="7">
    <source>
        <dbReference type="PROSITE-ProRule" id="PRU10090"/>
    </source>
</evidence>
<gene>
    <name type="primary">CTSB</name>
    <name type="ORF">QccE-13673</name>
</gene>
<keyword id="KW-0007">Acetylation</keyword>
<keyword id="KW-1003">Cell membrane</keyword>
<keyword id="KW-1015">Disulfide bond</keyword>
<keyword id="KW-0325">Glycoprotein</keyword>
<keyword id="KW-0378">Hydrolase</keyword>
<keyword id="KW-0458">Lysosome</keyword>
<keyword id="KW-0472">Membrane</keyword>
<keyword id="KW-0645">Protease</keyword>
<keyword id="KW-1185">Reference proteome</keyword>
<keyword id="KW-0964">Secreted</keyword>
<keyword id="KW-0732">Signal</keyword>
<keyword id="KW-0788">Thiol protease</keyword>
<keyword id="KW-0865">Zymogen</keyword>
<sequence>MWWLWASLCCLLALGDARSRPSFHPLSDELVNYVNKQNTTWQAGHNFYNVDVSYLKRLCGTFLGGPKPPQRVMFTEDLKLPESFDAREQWPQCPTIKEIRDQGSCGSCWAFGAVEAISDRICIHTNAHVSVEVSAEDLLTCCGIMCGDGCNGGYPAGAWNFWTRKGLVSGGLYDSHVGCRPYSIPPCEHHVNGSRPPCTGEGDTPKCSKICEPGYSPTYKQDKHYGYNSYSVSNSEKDIMAEIYKNGPVEGAFSVYSDFLLYKSGVYQHVTGEMMGGHAIRILGWGVENGTPYWLVANSWNTDWGDNGFFKILRGQDHCGIESEVVAGIPRTDQYWEKI</sequence>
<protein>
    <recommendedName>
        <fullName>Cathepsin B</fullName>
        <ecNumber evidence="2">3.4.22.1</ecNumber>
    </recommendedName>
    <component>
        <recommendedName>
            <fullName evidence="2">Cathepsin B light chain</fullName>
        </recommendedName>
    </component>
    <component>
        <recommendedName>
            <fullName evidence="2">Cathepsin B heavy chain</fullName>
        </recommendedName>
    </component>
</protein>
<name>CATB_MACFA</name>
<reference key="1">
    <citation type="submission" date="2005-06" db="EMBL/GenBank/DDBJ databases">
        <title>DNA sequences of macaque genes expressed in brain or testis and its evolutionary implications.</title>
        <authorList>
            <consortium name="International consortium for macaque cDNA sequencing and analysis"/>
        </authorList>
    </citation>
    <scope>NUCLEOTIDE SEQUENCE [LARGE SCALE MRNA]</scope>
    <source>
        <tissue>Brain cortex</tissue>
    </source>
</reference>
<accession>Q4R5M2</accession>
<dbReference type="EC" id="3.4.22.1" evidence="2"/>
<dbReference type="EMBL" id="AB169521">
    <property type="protein sequence ID" value="BAE01603.1"/>
    <property type="molecule type" value="mRNA"/>
</dbReference>
<dbReference type="RefSeq" id="NP_001270414.1">
    <property type="nucleotide sequence ID" value="NM_001283485.1"/>
</dbReference>
<dbReference type="SMR" id="Q4R5M2"/>
<dbReference type="IntAct" id="Q4R5M2">
    <property type="interactions" value="1"/>
</dbReference>
<dbReference type="MINT" id="Q4R5M2"/>
<dbReference type="STRING" id="9541.ENSMFAP00000011452"/>
<dbReference type="MEROPS" id="C01.060"/>
<dbReference type="GlyCosmos" id="Q4R5M2">
    <property type="glycosylation" value="1 site, No reported glycans"/>
</dbReference>
<dbReference type="Ensembl" id="ENSMFAT00000090811.1">
    <property type="protein sequence ID" value="ENSMFAP00000060243.1"/>
    <property type="gene ID" value="ENSMFAG00000014829.2"/>
</dbReference>
<dbReference type="VEuPathDB" id="HostDB:ENSMFAG00000014829"/>
<dbReference type="eggNOG" id="KOG1543">
    <property type="taxonomic scope" value="Eukaryota"/>
</dbReference>
<dbReference type="GeneTree" id="ENSGT00940000158680"/>
<dbReference type="OMA" id="DEKIPYW"/>
<dbReference type="Proteomes" id="UP000233100">
    <property type="component" value="Chromosome 8"/>
</dbReference>
<dbReference type="Bgee" id="ENSMFAG00000014829">
    <property type="expression patterns" value="Expressed in colon and 13 other cell types or tissues"/>
</dbReference>
<dbReference type="GO" id="GO:0016324">
    <property type="term" value="C:apical plasma membrane"/>
    <property type="evidence" value="ECO:0007669"/>
    <property type="project" value="UniProtKB-SubCell"/>
</dbReference>
<dbReference type="GO" id="GO:0005576">
    <property type="term" value="C:extracellular region"/>
    <property type="evidence" value="ECO:0007669"/>
    <property type="project" value="UniProtKB-SubCell"/>
</dbReference>
<dbReference type="GO" id="GO:0005764">
    <property type="term" value="C:lysosome"/>
    <property type="evidence" value="ECO:0007669"/>
    <property type="project" value="UniProtKB-SubCell"/>
</dbReference>
<dbReference type="GO" id="GO:0042470">
    <property type="term" value="C:melanosome"/>
    <property type="evidence" value="ECO:0007669"/>
    <property type="project" value="UniProtKB-SubCell"/>
</dbReference>
<dbReference type="GO" id="GO:0004197">
    <property type="term" value="F:cysteine-type endopeptidase activity"/>
    <property type="evidence" value="ECO:0007669"/>
    <property type="project" value="UniProtKB-EC"/>
</dbReference>
<dbReference type="GO" id="GO:0004175">
    <property type="term" value="F:endopeptidase activity"/>
    <property type="evidence" value="ECO:0000250"/>
    <property type="project" value="UniProtKB"/>
</dbReference>
<dbReference type="GO" id="GO:0006508">
    <property type="term" value="P:proteolysis"/>
    <property type="evidence" value="ECO:0007669"/>
    <property type="project" value="UniProtKB-KW"/>
</dbReference>
<dbReference type="CDD" id="cd02620">
    <property type="entry name" value="Peptidase_C1A_CathepsinB"/>
    <property type="match status" value="1"/>
</dbReference>
<dbReference type="FunFam" id="3.90.70.10:FF:000031">
    <property type="entry name" value="Cathepsin B"/>
    <property type="match status" value="1"/>
</dbReference>
<dbReference type="Gene3D" id="3.90.70.10">
    <property type="entry name" value="Cysteine proteinases"/>
    <property type="match status" value="1"/>
</dbReference>
<dbReference type="InterPro" id="IPR038765">
    <property type="entry name" value="Papain-like_cys_pep_sf"/>
</dbReference>
<dbReference type="InterPro" id="IPR025661">
    <property type="entry name" value="Pept_asp_AS"/>
</dbReference>
<dbReference type="InterPro" id="IPR000169">
    <property type="entry name" value="Pept_cys_AS"/>
</dbReference>
<dbReference type="InterPro" id="IPR025660">
    <property type="entry name" value="Pept_his_AS"/>
</dbReference>
<dbReference type="InterPro" id="IPR013128">
    <property type="entry name" value="Peptidase_C1A"/>
</dbReference>
<dbReference type="InterPro" id="IPR000668">
    <property type="entry name" value="Peptidase_C1A_C"/>
</dbReference>
<dbReference type="InterPro" id="IPR012599">
    <property type="entry name" value="Propeptide_C1A"/>
</dbReference>
<dbReference type="PANTHER" id="PTHR12411">
    <property type="entry name" value="CYSTEINE PROTEASE FAMILY C1-RELATED"/>
    <property type="match status" value="1"/>
</dbReference>
<dbReference type="Pfam" id="PF00112">
    <property type="entry name" value="Peptidase_C1"/>
    <property type="match status" value="1"/>
</dbReference>
<dbReference type="Pfam" id="PF08127">
    <property type="entry name" value="Propeptide_C1"/>
    <property type="match status" value="1"/>
</dbReference>
<dbReference type="PRINTS" id="PR00705">
    <property type="entry name" value="PAPAIN"/>
</dbReference>
<dbReference type="SMART" id="SM00645">
    <property type="entry name" value="Pept_C1"/>
    <property type="match status" value="1"/>
</dbReference>
<dbReference type="SUPFAM" id="SSF54001">
    <property type="entry name" value="Cysteine proteinases"/>
    <property type="match status" value="1"/>
</dbReference>
<dbReference type="PROSITE" id="PS00640">
    <property type="entry name" value="THIOL_PROTEASE_ASN"/>
    <property type="match status" value="1"/>
</dbReference>
<dbReference type="PROSITE" id="PS00139">
    <property type="entry name" value="THIOL_PROTEASE_CYS"/>
    <property type="match status" value="1"/>
</dbReference>
<dbReference type="PROSITE" id="PS00639">
    <property type="entry name" value="THIOL_PROTEASE_HIS"/>
    <property type="match status" value="1"/>
</dbReference>
<organism>
    <name type="scientific">Macaca fascicularis</name>
    <name type="common">Crab-eating macaque</name>
    <name type="synonym">Cynomolgus monkey</name>
    <dbReference type="NCBI Taxonomy" id="9541"/>
    <lineage>
        <taxon>Eukaryota</taxon>
        <taxon>Metazoa</taxon>
        <taxon>Chordata</taxon>
        <taxon>Craniata</taxon>
        <taxon>Vertebrata</taxon>
        <taxon>Euteleostomi</taxon>
        <taxon>Mammalia</taxon>
        <taxon>Eutheria</taxon>
        <taxon>Euarchontoglires</taxon>
        <taxon>Primates</taxon>
        <taxon>Haplorrhini</taxon>
        <taxon>Catarrhini</taxon>
        <taxon>Cercopithecidae</taxon>
        <taxon>Cercopithecinae</taxon>
        <taxon>Macaca</taxon>
    </lineage>
</organism>
<comment type="function">
    <text evidence="1 2 3">Thiol protease which is believed to participate in intracellular degradation and turnover of proteins (By similarity). Cleaves matrix extracellular phosphoglycoprotein MEPE (By similarity). Involved in the solubilization of cross-linked TG/thyroglobulin in the thyroid follicle lumen (By similarity). Has also been implicated in tumor invasion and metastasis (By similarity).</text>
</comment>
<comment type="catalytic activity">
    <reaction evidence="2">
        <text>Hydrolysis of proteins with broad specificity for peptide bonds. Preferentially cleaves -Arg-Arg-|-Xaa bonds in small molecule substrates (thus differing from cathepsin L). In addition to being an endopeptidase, shows peptidyl-dipeptidase activity, liberating C-terminal dipeptides.</text>
        <dbReference type="EC" id="3.4.22.1"/>
    </reaction>
</comment>
<comment type="subunit">
    <text evidence="2">Dimer of a heavy chain and a light chain cross-linked by a disulfide bond. Interacts with SRPX2. Directly interacts with SHKBP1.</text>
</comment>
<comment type="subcellular location">
    <subcellularLocation>
        <location evidence="3">Lysosome</location>
    </subcellularLocation>
    <subcellularLocation>
        <location evidence="2">Melanosome</location>
    </subcellularLocation>
    <subcellularLocation>
        <location evidence="3">Secreted</location>
        <location evidence="3">Extracellular space</location>
    </subcellularLocation>
    <subcellularLocation>
        <location evidence="3">Apical cell membrane</location>
        <topology evidence="3">Peripheral membrane protein</topology>
        <orientation evidence="3">Extracellular side</orientation>
    </subcellularLocation>
    <text evidence="3">Localizes to the lumen of thyroid follicles and to the apical membrane of thyroid epithelial cells.</text>
</comment>
<comment type="similarity">
    <text evidence="5 6 7">Belongs to the peptidase C1 family.</text>
</comment>
<feature type="signal peptide" evidence="4">
    <location>
        <begin position="1"/>
        <end position="17"/>
    </location>
</feature>
<feature type="propeptide" id="PRO_0000330875" description="Activation peptide" evidence="2">
    <location>
        <begin position="18"/>
        <end position="79"/>
    </location>
</feature>
<feature type="chain" id="PRO_0000330876" description="Cathepsin B">
    <location>
        <begin position="80"/>
        <end position="333"/>
    </location>
</feature>
<feature type="chain" id="PRO_0000330877" description="Cathepsin B light chain" evidence="2">
    <location>
        <begin position="80"/>
        <end position="126"/>
    </location>
</feature>
<feature type="chain" id="PRO_0000330878" description="Cathepsin B heavy chain" evidence="2">
    <location>
        <begin position="129"/>
        <end position="333"/>
    </location>
</feature>
<feature type="propeptide" id="PRO_0000330879" evidence="2">
    <location>
        <begin position="334"/>
        <end position="339"/>
    </location>
</feature>
<feature type="active site" evidence="5">
    <location>
        <position position="108"/>
    </location>
</feature>
<feature type="active site" evidence="6">
    <location>
        <position position="278"/>
    </location>
</feature>
<feature type="active site" evidence="7">
    <location>
        <position position="298"/>
    </location>
</feature>
<feature type="modified residue" description="N6-acetyllysine" evidence="3">
    <location>
        <position position="220"/>
    </location>
</feature>
<feature type="glycosylation site" description="N-linked (GlcNAc...) asparagine" evidence="4">
    <location>
        <position position="192"/>
    </location>
</feature>
<feature type="disulfide bond" evidence="2">
    <location>
        <begin position="93"/>
        <end position="122"/>
    </location>
</feature>
<feature type="disulfide bond" evidence="2">
    <location>
        <begin position="105"/>
        <end position="150"/>
    </location>
</feature>
<feature type="disulfide bond" evidence="2">
    <location>
        <begin position="141"/>
        <end position="207"/>
    </location>
</feature>
<feature type="disulfide bond" evidence="2">
    <location>
        <begin position="142"/>
        <end position="146"/>
    </location>
</feature>
<feature type="disulfide bond" evidence="2">
    <location>
        <begin position="179"/>
        <end position="211"/>
    </location>
</feature>
<feature type="disulfide bond" evidence="2">
    <location>
        <begin position="187"/>
        <end position="198"/>
    </location>
</feature>
<proteinExistence type="evidence at transcript level"/>